<organism>
    <name type="scientific">Escherichia coli O139:H28 (strain E24377A / ETEC)</name>
    <dbReference type="NCBI Taxonomy" id="331111"/>
    <lineage>
        <taxon>Bacteria</taxon>
        <taxon>Pseudomonadati</taxon>
        <taxon>Pseudomonadota</taxon>
        <taxon>Gammaproteobacteria</taxon>
        <taxon>Enterobacterales</taxon>
        <taxon>Enterobacteriaceae</taxon>
        <taxon>Escherichia</taxon>
    </lineage>
</organism>
<keyword id="KW-0249">Electron transport</keyword>
<keyword id="KW-0274">FAD</keyword>
<keyword id="KW-0285">Flavoprotein</keyword>
<keyword id="KW-1185">Reference proteome</keyword>
<keyword id="KW-0813">Transport</keyword>
<comment type="function">
    <text evidence="1">Required for anaerobic carnitine reduction. May bring reductant to CaiA.</text>
</comment>
<comment type="pathway">
    <text evidence="1">Amine and polyamine metabolism; carnitine metabolism.</text>
</comment>
<comment type="subunit">
    <text evidence="1">Heterodimer of FixA and FixB.</text>
</comment>
<comment type="similarity">
    <text evidence="1">Belongs to the ETF alpha-subunit/FixB family.</text>
</comment>
<evidence type="ECO:0000255" key="1">
    <source>
        <dbReference type="HAMAP-Rule" id="MF_01056"/>
    </source>
</evidence>
<sequence>MNTFSQVWVFSDTPSRLPELMNGAQALANQINTFVLNDADGAQAIQLGANHVWKLNGKPDDRMIEDYAGVMADTIRQHGADGLVLLPNTRRGKLLAAKLGYRLKVAVSNDASTVSVQDGKATVKHMVYGGLAIGEERIATPYAVLTISSGTFDAAQPDASRTGETHTVEWQAPAVAITRTATQARQSNSVDLDKARLVVSVGRGIGSKENIALAEQLCKAIGAELACSRPVAENEKWMEHERYVGISNLMLKPELYLAVGISGQIQHMVGANASQTIFAINKDKNAPIFQYADYGIVGDAVKILPALIAALAR</sequence>
<reference key="1">
    <citation type="journal article" date="2008" name="J. Bacteriol.">
        <title>The pangenome structure of Escherichia coli: comparative genomic analysis of E. coli commensal and pathogenic isolates.</title>
        <authorList>
            <person name="Rasko D.A."/>
            <person name="Rosovitz M.J."/>
            <person name="Myers G.S.A."/>
            <person name="Mongodin E.F."/>
            <person name="Fricke W.F."/>
            <person name="Gajer P."/>
            <person name="Crabtree J."/>
            <person name="Sebaihia M."/>
            <person name="Thomson N.R."/>
            <person name="Chaudhuri R."/>
            <person name="Henderson I.R."/>
            <person name="Sperandio V."/>
            <person name="Ravel J."/>
        </authorList>
    </citation>
    <scope>NUCLEOTIDE SEQUENCE [LARGE SCALE GENOMIC DNA]</scope>
    <source>
        <strain>E24377A / ETEC</strain>
    </source>
</reference>
<protein>
    <recommendedName>
        <fullName evidence="1">Protein FixB</fullName>
    </recommendedName>
</protein>
<accession>A7ZHD5</accession>
<proteinExistence type="inferred from homology"/>
<dbReference type="EMBL" id="CP000800">
    <property type="protein sequence ID" value="ABV16982.1"/>
    <property type="molecule type" value="Genomic_DNA"/>
</dbReference>
<dbReference type="RefSeq" id="WP_001091505.1">
    <property type="nucleotide sequence ID" value="NC_009801.1"/>
</dbReference>
<dbReference type="SMR" id="A7ZHD5"/>
<dbReference type="KEGG" id="ecw:EcE24377A_0046"/>
<dbReference type="HOGENOM" id="CLU_034178_0_1_6"/>
<dbReference type="UniPathway" id="UPA00117"/>
<dbReference type="Proteomes" id="UP000001122">
    <property type="component" value="Chromosome"/>
</dbReference>
<dbReference type="GO" id="GO:0009055">
    <property type="term" value="F:electron transfer activity"/>
    <property type="evidence" value="ECO:0007669"/>
    <property type="project" value="InterPro"/>
</dbReference>
<dbReference type="GO" id="GO:0050660">
    <property type="term" value="F:flavin adenine dinucleotide binding"/>
    <property type="evidence" value="ECO:0007669"/>
    <property type="project" value="InterPro"/>
</dbReference>
<dbReference type="GO" id="GO:0009437">
    <property type="term" value="P:carnitine metabolic process"/>
    <property type="evidence" value="ECO:0007669"/>
    <property type="project" value="UniProtKB-UniRule"/>
</dbReference>
<dbReference type="GO" id="GO:0033539">
    <property type="term" value="P:fatty acid beta-oxidation using acyl-CoA dehydrogenase"/>
    <property type="evidence" value="ECO:0007669"/>
    <property type="project" value="TreeGrafter"/>
</dbReference>
<dbReference type="FunFam" id="3.40.50.1220:FF:000004">
    <property type="entry name" value="Electron transfer flavoprotein"/>
    <property type="match status" value="1"/>
</dbReference>
<dbReference type="FunFam" id="3.40.50.620:FF:000067">
    <property type="entry name" value="Protein FixB"/>
    <property type="match status" value="1"/>
</dbReference>
<dbReference type="Gene3D" id="3.40.50.620">
    <property type="entry name" value="HUPs"/>
    <property type="match status" value="1"/>
</dbReference>
<dbReference type="Gene3D" id="3.40.50.1220">
    <property type="entry name" value="TPP-binding domain"/>
    <property type="match status" value="1"/>
</dbReference>
<dbReference type="HAMAP" id="MF_01056">
    <property type="entry name" value="FixB"/>
    <property type="match status" value="1"/>
</dbReference>
<dbReference type="InterPro" id="IPR029035">
    <property type="entry name" value="DHS-like_NAD/FAD-binding_dom"/>
</dbReference>
<dbReference type="InterPro" id="IPR014730">
    <property type="entry name" value="ETF_a/b_N"/>
</dbReference>
<dbReference type="InterPro" id="IPR001308">
    <property type="entry name" value="ETF_a/FixB"/>
</dbReference>
<dbReference type="InterPro" id="IPR014731">
    <property type="entry name" value="ETF_asu_C"/>
</dbReference>
<dbReference type="InterPro" id="IPR018206">
    <property type="entry name" value="ETF_asu_C_CS"/>
</dbReference>
<dbReference type="InterPro" id="IPR023461">
    <property type="entry name" value="FixB"/>
</dbReference>
<dbReference type="InterPro" id="IPR014729">
    <property type="entry name" value="Rossmann-like_a/b/a_fold"/>
</dbReference>
<dbReference type="NCBIfam" id="NF002889">
    <property type="entry name" value="PRK03363.1"/>
    <property type="match status" value="1"/>
</dbReference>
<dbReference type="PANTHER" id="PTHR43153">
    <property type="entry name" value="ELECTRON TRANSFER FLAVOPROTEIN ALPHA"/>
    <property type="match status" value="1"/>
</dbReference>
<dbReference type="PANTHER" id="PTHR43153:SF5">
    <property type="entry name" value="PROTEIN FIXB-RELATED"/>
    <property type="match status" value="1"/>
</dbReference>
<dbReference type="Pfam" id="PF01012">
    <property type="entry name" value="ETF"/>
    <property type="match status" value="1"/>
</dbReference>
<dbReference type="Pfam" id="PF00766">
    <property type="entry name" value="ETF_alpha"/>
    <property type="match status" value="1"/>
</dbReference>
<dbReference type="PIRSF" id="PIRSF000089">
    <property type="entry name" value="Electra_flavoP_a"/>
    <property type="match status" value="1"/>
</dbReference>
<dbReference type="SMART" id="SM00893">
    <property type="entry name" value="ETF"/>
    <property type="match status" value="1"/>
</dbReference>
<dbReference type="SUPFAM" id="SSF52402">
    <property type="entry name" value="Adenine nucleotide alpha hydrolases-like"/>
    <property type="match status" value="1"/>
</dbReference>
<dbReference type="SUPFAM" id="SSF52467">
    <property type="entry name" value="DHS-like NAD/FAD-binding domain"/>
    <property type="match status" value="1"/>
</dbReference>
<dbReference type="PROSITE" id="PS00696">
    <property type="entry name" value="ETF_ALPHA"/>
    <property type="match status" value="1"/>
</dbReference>
<gene>
    <name evidence="1" type="primary">fixB</name>
    <name type="ordered locus">EcE24377A_0046</name>
</gene>
<name>FIXB_ECO24</name>
<feature type="chain" id="PRO_1000064382" description="Protein FixB">
    <location>
        <begin position="1"/>
        <end position="313"/>
    </location>
</feature>
<feature type="binding site" evidence="1">
    <location>
        <begin position="255"/>
        <end position="283"/>
    </location>
    <ligand>
        <name>FAD</name>
        <dbReference type="ChEBI" id="CHEBI:57692"/>
    </ligand>
</feature>